<dbReference type="EC" id="7.1.1.-" evidence="1"/>
<dbReference type="EMBL" id="CP000239">
    <property type="protein sequence ID" value="ABD00061.1"/>
    <property type="molecule type" value="Genomic_DNA"/>
</dbReference>
<dbReference type="RefSeq" id="WP_011430735.1">
    <property type="nucleotide sequence ID" value="NC_007775.1"/>
</dbReference>
<dbReference type="SMR" id="Q2JTD6"/>
<dbReference type="STRING" id="321327.CYA_1915"/>
<dbReference type="KEGG" id="cya:CYA_1915"/>
<dbReference type="eggNOG" id="COG1008">
    <property type="taxonomic scope" value="Bacteria"/>
</dbReference>
<dbReference type="HOGENOM" id="CLU_007100_4_0_3"/>
<dbReference type="Proteomes" id="UP000008818">
    <property type="component" value="Chromosome"/>
</dbReference>
<dbReference type="GO" id="GO:0031676">
    <property type="term" value="C:plasma membrane-derived thylakoid membrane"/>
    <property type="evidence" value="ECO:0007669"/>
    <property type="project" value="UniProtKB-SubCell"/>
</dbReference>
<dbReference type="GO" id="GO:0008137">
    <property type="term" value="F:NADH dehydrogenase (ubiquinone) activity"/>
    <property type="evidence" value="ECO:0007669"/>
    <property type="project" value="InterPro"/>
</dbReference>
<dbReference type="GO" id="GO:0048039">
    <property type="term" value="F:ubiquinone binding"/>
    <property type="evidence" value="ECO:0007669"/>
    <property type="project" value="TreeGrafter"/>
</dbReference>
<dbReference type="GO" id="GO:0042773">
    <property type="term" value="P:ATP synthesis coupled electron transport"/>
    <property type="evidence" value="ECO:0007669"/>
    <property type="project" value="InterPro"/>
</dbReference>
<dbReference type="GO" id="GO:0015990">
    <property type="term" value="P:electron transport coupled proton transport"/>
    <property type="evidence" value="ECO:0007669"/>
    <property type="project" value="TreeGrafter"/>
</dbReference>
<dbReference type="HAMAP" id="MF_00491">
    <property type="entry name" value="NDH1_NuoM"/>
    <property type="match status" value="1"/>
</dbReference>
<dbReference type="InterPro" id="IPR022997">
    <property type="entry name" value="NADH_Q_OxRdtase_chain4"/>
</dbReference>
<dbReference type="InterPro" id="IPR010227">
    <property type="entry name" value="NADH_Q_OxRdtase_chainM/4"/>
</dbReference>
<dbReference type="InterPro" id="IPR003918">
    <property type="entry name" value="NADH_UbQ_OxRdtase"/>
</dbReference>
<dbReference type="InterPro" id="IPR001750">
    <property type="entry name" value="ND/Mrp_TM"/>
</dbReference>
<dbReference type="NCBIfam" id="TIGR01972">
    <property type="entry name" value="NDH_I_M"/>
    <property type="match status" value="1"/>
</dbReference>
<dbReference type="NCBIfam" id="NF002713">
    <property type="entry name" value="PRK02546.1"/>
    <property type="match status" value="1"/>
</dbReference>
<dbReference type="NCBIfam" id="NF009212">
    <property type="entry name" value="PRK12561.1"/>
    <property type="match status" value="1"/>
</dbReference>
<dbReference type="PANTHER" id="PTHR43507:SF21">
    <property type="entry name" value="NAD(P)H-QUINONE OXIDOREDUCTASE CHAIN 4, CHLOROPLASTIC"/>
    <property type="match status" value="1"/>
</dbReference>
<dbReference type="PANTHER" id="PTHR43507">
    <property type="entry name" value="NADH-UBIQUINONE OXIDOREDUCTASE CHAIN 4"/>
    <property type="match status" value="1"/>
</dbReference>
<dbReference type="Pfam" id="PF00361">
    <property type="entry name" value="Proton_antipo_M"/>
    <property type="match status" value="1"/>
</dbReference>
<dbReference type="PRINTS" id="PR01437">
    <property type="entry name" value="NUOXDRDTASE4"/>
</dbReference>
<comment type="function">
    <text evidence="1">NDH-1 shuttles electrons from NAD(P)H, via FMN and iron-sulfur (Fe-S) centers, to quinones in the respiratory chain. The immediate electron acceptor for the enzyme in this species is believed to be plastoquinone. Couples the redox reaction to proton translocation (for every two electrons transferred, four hydrogen ions are translocated across the cytoplasmic membrane), and thus conserves the redox energy in a proton gradient.</text>
</comment>
<comment type="catalytic activity">
    <reaction evidence="1">
        <text>a plastoquinone + NADH + (n+1) H(+)(in) = a plastoquinol + NAD(+) + n H(+)(out)</text>
        <dbReference type="Rhea" id="RHEA:42608"/>
        <dbReference type="Rhea" id="RHEA-COMP:9561"/>
        <dbReference type="Rhea" id="RHEA-COMP:9562"/>
        <dbReference type="ChEBI" id="CHEBI:15378"/>
        <dbReference type="ChEBI" id="CHEBI:17757"/>
        <dbReference type="ChEBI" id="CHEBI:57540"/>
        <dbReference type="ChEBI" id="CHEBI:57945"/>
        <dbReference type="ChEBI" id="CHEBI:62192"/>
    </reaction>
</comment>
<comment type="catalytic activity">
    <reaction evidence="1">
        <text>a plastoquinone + NADPH + (n+1) H(+)(in) = a plastoquinol + NADP(+) + n H(+)(out)</text>
        <dbReference type="Rhea" id="RHEA:42612"/>
        <dbReference type="Rhea" id="RHEA-COMP:9561"/>
        <dbReference type="Rhea" id="RHEA-COMP:9562"/>
        <dbReference type="ChEBI" id="CHEBI:15378"/>
        <dbReference type="ChEBI" id="CHEBI:17757"/>
        <dbReference type="ChEBI" id="CHEBI:57783"/>
        <dbReference type="ChEBI" id="CHEBI:58349"/>
        <dbReference type="ChEBI" id="CHEBI:62192"/>
    </reaction>
</comment>
<comment type="subcellular location">
    <subcellularLocation>
        <location evidence="1">Cellular thylakoid membrane</location>
        <topology evidence="1">Multi-pass membrane protein</topology>
    </subcellularLocation>
</comment>
<comment type="similarity">
    <text evidence="1">Belongs to the complex I subunit 4 family.</text>
</comment>
<organism>
    <name type="scientific">Synechococcus sp. (strain JA-3-3Ab)</name>
    <name type="common">Cyanobacteria bacterium Yellowstone A-Prime</name>
    <dbReference type="NCBI Taxonomy" id="321327"/>
    <lineage>
        <taxon>Bacteria</taxon>
        <taxon>Bacillati</taxon>
        <taxon>Cyanobacteriota</taxon>
        <taxon>Cyanophyceae</taxon>
        <taxon>Synechococcales</taxon>
        <taxon>Synechococcaceae</taxon>
        <taxon>Synechococcus</taxon>
    </lineage>
</organism>
<accession>Q2JTD6</accession>
<name>NU4C2_SYNJA</name>
<protein>
    <recommendedName>
        <fullName evidence="1">NAD(P)H-quinone oxidoreductase chain 4 2</fullName>
        <ecNumber evidence="1">7.1.1.-</ecNumber>
    </recommendedName>
    <alternativeName>
        <fullName evidence="1">NAD(P)H dehydrogenase I, chain 4 2</fullName>
    </alternativeName>
    <alternativeName>
        <fullName evidence="1">NDH-1, chain 4 2</fullName>
    </alternativeName>
</protein>
<gene>
    <name evidence="1" type="primary">ndhD2</name>
    <name type="ordered locus">CYA_1915</name>
</gene>
<feature type="chain" id="PRO_0000343257" description="NAD(P)H-quinone oxidoreductase chain 4 2">
    <location>
        <begin position="1"/>
        <end position="535"/>
    </location>
</feature>
<feature type="transmembrane region" description="Helical" evidence="1">
    <location>
        <begin position="9"/>
        <end position="29"/>
    </location>
</feature>
<feature type="transmembrane region" description="Helical" evidence="1">
    <location>
        <begin position="51"/>
        <end position="71"/>
    </location>
</feature>
<feature type="transmembrane region" description="Helical" evidence="1">
    <location>
        <begin position="106"/>
        <end position="126"/>
    </location>
</feature>
<feature type="transmembrane region" description="Helical" evidence="1">
    <location>
        <begin position="130"/>
        <end position="150"/>
    </location>
</feature>
<feature type="transmembrane region" description="Helical" evidence="1">
    <location>
        <begin position="152"/>
        <end position="172"/>
    </location>
</feature>
<feature type="transmembrane region" description="Helical" evidence="1">
    <location>
        <begin position="184"/>
        <end position="204"/>
    </location>
</feature>
<feature type="transmembrane region" description="Helical" evidence="1">
    <location>
        <begin position="227"/>
        <end position="247"/>
    </location>
</feature>
<feature type="transmembrane region" description="Helical" evidence="1">
    <location>
        <begin position="258"/>
        <end position="278"/>
    </location>
</feature>
<feature type="transmembrane region" description="Helical" evidence="1">
    <location>
        <begin position="290"/>
        <end position="310"/>
    </location>
</feature>
<feature type="transmembrane region" description="Helical" evidence="1">
    <location>
        <begin position="326"/>
        <end position="346"/>
    </location>
</feature>
<feature type="transmembrane region" description="Helical" evidence="1">
    <location>
        <begin position="347"/>
        <end position="367"/>
    </location>
</feature>
<feature type="transmembrane region" description="Helical" evidence="1">
    <location>
        <begin position="399"/>
        <end position="419"/>
    </location>
</feature>
<feature type="transmembrane region" description="Helical" evidence="1">
    <location>
        <begin position="432"/>
        <end position="452"/>
    </location>
</feature>
<feature type="transmembrane region" description="Helical" evidence="1">
    <location>
        <begin position="479"/>
        <end position="499"/>
    </location>
</feature>
<keyword id="KW-0472">Membrane</keyword>
<keyword id="KW-0520">NAD</keyword>
<keyword id="KW-0521">NADP</keyword>
<keyword id="KW-0618">Plastoquinone</keyword>
<keyword id="KW-0874">Quinone</keyword>
<keyword id="KW-0793">Thylakoid</keyword>
<keyword id="KW-1278">Translocase</keyword>
<keyword id="KW-0812">Transmembrane</keyword>
<keyword id="KW-1133">Transmembrane helix</keyword>
<reference key="1">
    <citation type="journal article" date="2007" name="ISME J.">
        <title>Population level functional diversity in a microbial community revealed by comparative genomic and metagenomic analyses.</title>
        <authorList>
            <person name="Bhaya D."/>
            <person name="Grossman A.R."/>
            <person name="Steunou A.-S."/>
            <person name="Khuri N."/>
            <person name="Cohan F.M."/>
            <person name="Hamamura N."/>
            <person name="Melendrez M.C."/>
            <person name="Bateson M.M."/>
            <person name="Ward D.M."/>
            <person name="Heidelberg J.F."/>
        </authorList>
    </citation>
    <scope>NUCLEOTIDE SEQUENCE [LARGE SCALE GENOMIC DNA]</scope>
    <source>
        <strain>JA-3-3Ab</strain>
    </source>
</reference>
<sequence>MALPSLHEFPWLTTVIVYPVVAALFIPLIPAPAGDPTTRVYAQKLAERVRWFALFIAVTDLLILLAGFYVGYDPSQTSLQLLERYTWVPQVGLSWSVGADGLSMPLILLTAFVTTLAILAAWPVTLKPRLFYFLMLAMYGGQIGVFAVQDMLLFFLMWELELIPVYLLLSIWGGYNRLYAATKFILYTALSSLFILVAGLAMAFYGDPISFDMTDLAHKAYPLSFQLLLYGAFLIAYGVKLPVFPLHTWLPDAHGEATAPVHMLLAGILLKMGGYALMRMNVGMLPDAHLYFAPVLIVLGVVNIIFAALTSFAQRNLKRKIAYSSISHMGFVLIGIGSLTEIGMSGAMLQMISHGLIGASLFFLVGATYDRTHTLELEEMGGVGLKMPKIFSMFTACSLASLALPGMSGFVAELMVFIGMATTDAYSLPFRLVVVFLAAVGVILTPIYLLSMLRQIFFGPENKELTEHEELVDAEPREVFIIACLLIPIIGIGLYPKLVTSLYDQSTNALVALLRQELSSIGATVAQAPALYSAD</sequence>
<proteinExistence type="inferred from homology"/>
<evidence type="ECO:0000255" key="1">
    <source>
        <dbReference type="HAMAP-Rule" id="MF_00491"/>
    </source>
</evidence>